<accession>Q3C1D4</accession>
<sequence>MINEIQIAAFNAAYAKTIDSDAMEQWPTFFTKDCHYCVTNVDNHDEGLAAGIVWADSQDMLTDRISALREANIYERHRYRHILGLPSIQSGDATQASASTPFMVLRIMHTGETEVFASGEYLDKFTTIDGKLRLQERIAVCDSTVTDTLMALPL</sequence>
<feature type="chain" id="PRO_0000419005" description="Terephthalate 1,2-dioxygenase, terminal oxygenase component subunit beta 2">
    <location>
        <begin position="1"/>
        <end position="154"/>
    </location>
</feature>
<organism>
    <name type="scientific">Comamonas sp</name>
    <dbReference type="NCBI Taxonomy" id="34028"/>
    <lineage>
        <taxon>Bacteria</taxon>
        <taxon>Pseudomonadati</taxon>
        <taxon>Pseudomonadota</taxon>
        <taxon>Betaproteobacteria</taxon>
        <taxon>Burkholderiales</taxon>
        <taxon>Comamonadaceae</taxon>
        <taxon>Comamonas</taxon>
    </lineage>
</organism>
<dbReference type="EC" id="1.14.12.15" evidence="2"/>
<dbReference type="EMBL" id="AB238679">
    <property type="protein sequence ID" value="BAE47086.1"/>
    <property type="molecule type" value="Genomic_DNA"/>
</dbReference>
<dbReference type="RefSeq" id="WP_019043842.1">
    <property type="nucleotide sequence ID" value="NZ_SPET01000024.1"/>
</dbReference>
<dbReference type="SMR" id="Q3C1D4"/>
<dbReference type="GO" id="GO:0005506">
    <property type="term" value="F:iron ion binding"/>
    <property type="evidence" value="ECO:0000314"/>
    <property type="project" value="UniProtKB"/>
</dbReference>
<dbReference type="GO" id="GO:0018628">
    <property type="term" value="F:terephthalate 1,2-dioxygenase activity"/>
    <property type="evidence" value="ECO:0000314"/>
    <property type="project" value="UniProtKB"/>
</dbReference>
<dbReference type="GO" id="GO:0018963">
    <property type="term" value="P:phthalate metabolic process"/>
    <property type="evidence" value="ECO:0000314"/>
    <property type="project" value="UniProtKB"/>
</dbReference>
<dbReference type="FunFam" id="3.10.450.50:FF:000040">
    <property type="entry name" value="Terephthalate 1,2-dioxygenase subunit beta"/>
    <property type="match status" value="1"/>
</dbReference>
<dbReference type="Gene3D" id="3.10.450.50">
    <property type="match status" value="1"/>
</dbReference>
<dbReference type="InterPro" id="IPR032710">
    <property type="entry name" value="NTF2-like_dom_sf"/>
</dbReference>
<dbReference type="InterPro" id="IPR000391">
    <property type="entry name" value="Rng_hydr_dOase-bsu"/>
</dbReference>
<dbReference type="Pfam" id="PF00866">
    <property type="entry name" value="Ring_hydroxyl_B"/>
    <property type="match status" value="1"/>
</dbReference>
<dbReference type="SUPFAM" id="SSF54427">
    <property type="entry name" value="NTF2-like"/>
    <property type="match status" value="1"/>
</dbReference>
<gene>
    <name type="primary">tphA3II</name>
</gene>
<comment type="function">
    <text evidence="1 2 3">Component of the terephthalate 1,2-dioxygenase multicomponent enzyme system which catalyzes the dioxygenation of terephthalate (TER/TPA) to 1,2-dihydroxy-3,5-cyclohexadiene-1,4-dicarboxylic acid (DCD). It can also use 2,5-dicarboxypyridine (PDC) and 1,4-napthalenedicarboxylic acid (NDC) as substrates, and preferentially uses NADPH which is the physiological electron donor.</text>
</comment>
<comment type="catalytic activity">
    <reaction evidence="2">
        <text>terephthalate + NADH + O2 + H(+) = (3S,4R)-3,4-dihydroxycyclohexa-1,5-diene-1,4-dicarboxylate + NAD(+)</text>
        <dbReference type="Rhea" id="RHEA:10312"/>
        <dbReference type="ChEBI" id="CHEBI:15378"/>
        <dbReference type="ChEBI" id="CHEBI:15379"/>
        <dbReference type="ChEBI" id="CHEBI:30043"/>
        <dbReference type="ChEBI" id="CHEBI:57412"/>
        <dbReference type="ChEBI" id="CHEBI:57540"/>
        <dbReference type="ChEBI" id="CHEBI:57945"/>
        <dbReference type="EC" id="1.14.12.15"/>
    </reaction>
</comment>
<comment type="cofactor">
    <cofactor evidence="2 3">
        <name>Fe cation</name>
        <dbReference type="ChEBI" id="CHEBI:24875"/>
    </cofactor>
</comment>
<comment type="activity regulation">
    <text evidence="2">Inhibited by EDTA.</text>
</comment>
<comment type="biophysicochemical properties">
    <kinetics>
        <KM evidence="2">72 uM for TPA (at 30 degrees Celsius and at ph 7)</KM>
        <Vmax evidence="2">9.87 umol/min/mg enzyme with TPA as substrate (at 30 degrees Celsius and at ph 7)</Vmax>
    </kinetics>
    <phDependence>
        <text evidence="2">Optimum pH is 7. About 20% of maximum TPADO activity is observed at pH 9, whereas no activity is observed at pH 5.</text>
    </phDependence>
    <temperatureDependence>
        <text evidence="2">Optimum temperature is 30 degrees Celsius. Approximately 60% of maximum TPADO activity is observed at 15 degrees Celsius, and activity is completely lost at 50 degrees Celsius.</text>
    </temperatureDependence>
</comment>
<comment type="subunit">
    <text evidence="2 3">Heterotetramer composed of 2 alpha (TphA2I and TphA2II) and 2 beta (TphA3I and TphA3II) subunits. Part of a multicomponent enzyme system composed of a reductase (TphA1I or TphA1II) and a two-subunit oxygenase component (TphA2I or TphA2II and TphA3I or TphA3II).</text>
</comment>
<comment type="similarity">
    <text evidence="4">Belongs to the bacterial ring-hydroxylating dioxygenase beta subunit family.</text>
</comment>
<proteinExistence type="evidence at protein level"/>
<name>TPDB2_COMSP</name>
<evidence type="ECO:0000269" key="1">
    <source>
    </source>
</evidence>
<evidence type="ECO:0000269" key="2">
    <source>
    </source>
</evidence>
<evidence type="ECO:0000269" key="3">
    <source>
    </source>
</evidence>
<evidence type="ECO:0000305" key="4"/>
<protein>
    <recommendedName>
        <fullName>Terephthalate 1,2-dioxygenase, terminal oxygenase component subunit beta 2</fullName>
        <shortName>TPADO terminal oxygenase component</shortName>
        <ecNumber evidence="2">1.14.12.15</ecNumber>
    </recommendedName>
    <alternativeName>
        <fullName>TER dioxygenase system</fullName>
        <shortName>TERDOS</shortName>
    </alternativeName>
    <alternativeName>
        <fullName>Terephthalate 1,2-dioxygenase small subunit 2</fullName>
    </alternativeName>
</protein>
<keyword id="KW-0223">Dioxygenase</keyword>
<keyword id="KW-0903">Direct protein sequencing</keyword>
<keyword id="KW-0520">NAD</keyword>
<keyword id="KW-0560">Oxidoreductase</keyword>
<reference key="1">
    <citation type="journal article" date="2006" name="Appl. Environ. Microbiol.">
        <title>Characterization of the terephthalate degradation genes of Comamonas sp. strain E6.</title>
        <authorList>
            <person name="Sasoh M."/>
            <person name="Masai E."/>
            <person name="Ishibashi S."/>
            <person name="Hara H."/>
            <person name="Kamimura N."/>
            <person name="Miyauchi K."/>
            <person name="Fukuda M."/>
        </authorList>
    </citation>
    <scope>NUCLEOTIDE SEQUENCE [GENOMIC DNA]</scope>
    <scope>FUNCTION AS A TEREPHTHALATE DIOXYGENASE</scope>
    <scope>FUNCTION IN TPA DEGRADATION</scope>
    <source>
        <strain>E6</strain>
    </source>
</reference>
<reference key="2">
    <citation type="journal article" date="1994" name="J. Bacteriol.">
        <title>Terephthalate 1,2-dioxygenase system from Comamonas testosteroni T-2: purification and some properties of the oxygenase component.</title>
        <authorList>
            <person name="Schlafli H.R."/>
            <person name="Weiss M.A."/>
            <person name="Leisinger T."/>
            <person name="Cook A.M."/>
        </authorList>
    </citation>
    <scope>PROTEIN SEQUENCE OF 1-25</scope>
    <scope>FUNCTION AS A TEREPHTHALATE DIOXYGENASE</scope>
    <scope>SUBSTRATE SPECIFICITY</scope>
    <scope>COFACTOR</scope>
    <scope>SUBUNIT</scope>
    <source>
        <strain>E6</strain>
    </source>
</reference>
<reference key="3">
    <citation type="journal article" date="2008" name="Biosci. Biotechnol. Biochem.">
        <title>Enzymatic properties of terephthalate 1,2-dioxygenase of Comamonas sp. strain E6.</title>
        <authorList>
            <person name="Fukuhara Y."/>
            <person name="Kasai D."/>
            <person name="Katayama Y."/>
            <person name="Fukuda M."/>
            <person name="Masai E."/>
        </authorList>
    </citation>
    <scope>FUNCTION AS A TEREPHTHALATE DIOXYGENASE</scope>
    <scope>CATALYTIC ACTIVITY</scope>
    <scope>BIOPHYSICOCHEMICAL PROPERTIES</scope>
    <scope>ACTIVITY REGULATION</scope>
    <scope>COFACTOR</scope>
    <scope>SUBUNIT</scope>
    <scope>SUBSTRATE SPECIFICITY</scope>
    <source>
        <strain>E6</strain>
    </source>
</reference>